<gene>
    <name evidence="1" type="primary">rpmJ</name>
    <name type="ordered locus">SBO_3293</name>
</gene>
<sequence>MKVRASVKKLCRNCKIVKRDGVIRVICSAEPKHKQRQG</sequence>
<accession>Q31VX7</accession>
<feature type="chain" id="PRO_0000302296" description="Large ribosomal subunit protein bL36">
    <location>
        <begin position="1"/>
        <end position="38"/>
    </location>
</feature>
<keyword id="KW-0687">Ribonucleoprotein</keyword>
<keyword id="KW-0689">Ribosomal protein</keyword>
<comment type="similarity">
    <text evidence="1">Belongs to the bacterial ribosomal protein bL36 family.</text>
</comment>
<proteinExistence type="inferred from homology"/>
<reference key="1">
    <citation type="journal article" date="2005" name="Nucleic Acids Res.">
        <title>Genome dynamics and diversity of Shigella species, the etiologic agents of bacillary dysentery.</title>
        <authorList>
            <person name="Yang F."/>
            <person name="Yang J."/>
            <person name="Zhang X."/>
            <person name="Chen L."/>
            <person name="Jiang Y."/>
            <person name="Yan Y."/>
            <person name="Tang X."/>
            <person name="Wang J."/>
            <person name="Xiong Z."/>
            <person name="Dong J."/>
            <person name="Xue Y."/>
            <person name="Zhu Y."/>
            <person name="Xu X."/>
            <person name="Sun L."/>
            <person name="Chen S."/>
            <person name="Nie H."/>
            <person name="Peng J."/>
            <person name="Xu J."/>
            <person name="Wang Y."/>
            <person name="Yuan Z."/>
            <person name="Wen Y."/>
            <person name="Yao Z."/>
            <person name="Shen Y."/>
            <person name="Qiang B."/>
            <person name="Hou Y."/>
            <person name="Yu J."/>
            <person name="Jin Q."/>
        </authorList>
    </citation>
    <scope>NUCLEOTIDE SEQUENCE [LARGE SCALE GENOMIC DNA]</scope>
    <source>
        <strain>Sb227</strain>
    </source>
</reference>
<dbReference type="EMBL" id="CP000036">
    <property type="protein sequence ID" value="ABB67781.1"/>
    <property type="molecule type" value="Genomic_DNA"/>
</dbReference>
<dbReference type="RefSeq" id="WP_000868187.1">
    <property type="nucleotide sequence ID" value="NC_007613.1"/>
</dbReference>
<dbReference type="SMR" id="Q31VX7"/>
<dbReference type="GeneID" id="98390421"/>
<dbReference type="KEGG" id="sbo:SBO_3293"/>
<dbReference type="HOGENOM" id="CLU_135723_6_2_6"/>
<dbReference type="Proteomes" id="UP000007067">
    <property type="component" value="Chromosome"/>
</dbReference>
<dbReference type="GO" id="GO:0005737">
    <property type="term" value="C:cytoplasm"/>
    <property type="evidence" value="ECO:0007669"/>
    <property type="project" value="UniProtKB-ARBA"/>
</dbReference>
<dbReference type="GO" id="GO:1990904">
    <property type="term" value="C:ribonucleoprotein complex"/>
    <property type="evidence" value="ECO:0007669"/>
    <property type="project" value="UniProtKB-KW"/>
</dbReference>
<dbReference type="GO" id="GO:0005840">
    <property type="term" value="C:ribosome"/>
    <property type="evidence" value="ECO:0007669"/>
    <property type="project" value="UniProtKB-KW"/>
</dbReference>
<dbReference type="GO" id="GO:0003735">
    <property type="term" value="F:structural constituent of ribosome"/>
    <property type="evidence" value="ECO:0007669"/>
    <property type="project" value="InterPro"/>
</dbReference>
<dbReference type="GO" id="GO:0006412">
    <property type="term" value="P:translation"/>
    <property type="evidence" value="ECO:0007669"/>
    <property type="project" value="UniProtKB-UniRule"/>
</dbReference>
<dbReference type="HAMAP" id="MF_00251">
    <property type="entry name" value="Ribosomal_bL36"/>
    <property type="match status" value="1"/>
</dbReference>
<dbReference type="InterPro" id="IPR000473">
    <property type="entry name" value="Ribosomal_bL36"/>
</dbReference>
<dbReference type="InterPro" id="IPR035977">
    <property type="entry name" value="Ribosomal_bL36_sp"/>
</dbReference>
<dbReference type="NCBIfam" id="TIGR01022">
    <property type="entry name" value="rpmJ_bact"/>
    <property type="match status" value="1"/>
</dbReference>
<dbReference type="PANTHER" id="PTHR42888">
    <property type="entry name" value="50S RIBOSOMAL PROTEIN L36, CHLOROPLASTIC"/>
    <property type="match status" value="1"/>
</dbReference>
<dbReference type="PANTHER" id="PTHR42888:SF1">
    <property type="entry name" value="LARGE RIBOSOMAL SUBUNIT PROTEIN BL36C"/>
    <property type="match status" value="1"/>
</dbReference>
<dbReference type="Pfam" id="PF00444">
    <property type="entry name" value="Ribosomal_L36"/>
    <property type="match status" value="1"/>
</dbReference>
<dbReference type="SUPFAM" id="SSF57840">
    <property type="entry name" value="Ribosomal protein L36"/>
    <property type="match status" value="1"/>
</dbReference>
<dbReference type="PROSITE" id="PS00828">
    <property type="entry name" value="RIBOSOMAL_L36"/>
    <property type="match status" value="1"/>
</dbReference>
<organism>
    <name type="scientific">Shigella boydii serotype 4 (strain Sb227)</name>
    <dbReference type="NCBI Taxonomy" id="300268"/>
    <lineage>
        <taxon>Bacteria</taxon>
        <taxon>Pseudomonadati</taxon>
        <taxon>Pseudomonadota</taxon>
        <taxon>Gammaproteobacteria</taxon>
        <taxon>Enterobacterales</taxon>
        <taxon>Enterobacteriaceae</taxon>
        <taxon>Shigella</taxon>
    </lineage>
</organism>
<name>RL36_SHIBS</name>
<evidence type="ECO:0000255" key="1">
    <source>
        <dbReference type="HAMAP-Rule" id="MF_00251"/>
    </source>
</evidence>
<evidence type="ECO:0000305" key="2"/>
<protein>
    <recommendedName>
        <fullName evidence="1">Large ribosomal subunit protein bL36</fullName>
    </recommendedName>
    <alternativeName>
        <fullName evidence="2">50S ribosomal protein L36</fullName>
    </alternativeName>
</protein>